<feature type="signal peptide" evidence="2">
    <location>
        <begin position="1"/>
        <end position="22"/>
    </location>
</feature>
<feature type="propeptide" id="PRO_0000400821" evidence="1">
    <location>
        <begin position="23"/>
        <end position="48"/>
    </location>
</feature>
<feature type="peptide" id="PRO_0000400822" description="U4-theraphotoxin-Hhn1s">
    <location>
        <begin position="49"/>
        <end position="85"/>
    </location>
</feature>
<feature type="disulfide bond" evidence="1">
    <location>
        <begin position="52"/>
        <end position="66"/>
    </location>
</feature>
<feature type="disulfide bond" evidence="1">
    <location>
        <begin position="56"/>
        <end position="77"/>
    </location>
</feature>
<feature type="disulfide bond" evidence="1">
    <location>
        <begin position="71"/>
        <end position="82"/>
    </location>
</feature>
<proteinExistence type="inferred from homology"/>
<name>H2AA1_CYRHA</name>
<dbReference type="EMBL" id="GU293079">
    <property type="protein sequence ID" value="ADB56895.1"/>
    <property type="molecule type" value="Genomic_DNA"/>
</dbReference>
<dbReference type="SMR" id="D2Y2K2"/>
<dbReference type="ArachnoServer" id="AS001954">
    <property type="toxin name" value="U4-theraphotoxin-Hhn1s"/>
</dbReference>
<dbReference type="GO" id="GO:0005576">
    <property type="term" value="C:extracellular region"/>
    <property type="evidence" value="ECO:0007669"/>
    <property type="project" value="UniProtKB-SubCell"/>
</dbReference>
<dbReference type="GO" id="GO:0035792">
    <property type="term" value="C:host cell postsynaptic membrane"/>
    <property type="evidence" value="ECO:0007669"/>
    <property type="project" value="UniProtKB-KW"/>
</dbReference>
<dbReference type="GO" id="GO:0090729">
    <property type="term" value="F:toxin activity"/>
    <property type="evidence" value="ECO:0007669"/>
    <property type="project" value="UniProtKB-KW"/>
</dbReference>
<dbReference type="InterPro" id="IPR012625">
    <property type="entry name" value="Hwtx-2-like"/>
</dbReference>
<dbReference type="Pfam" id="PF08089">
    <property type="entry name" value="Toxin_20"/>
    <property type="match status" value="1"/>
</dbReference>
<dbReference type="SUPFAM" id="SSF57059">
    <property type="entry name" value="omega toxin-like"/>
    <property type="match status" value="1"/>
</dbReference>
<dbReference type="PROSITE" id="PS60022">
    <property type="entry name" value="HWTX_2"/>
    <property type="match status" value="1"/>
</dbReference>
<protein>
    <recommendedName>
        <fullName>U4-theraphotoxin-Hhn1s</fullName>
        <shortName>U4-TRTX-Hhn1s</shortName>
    </recommendedName>
    <alternativeName>
        <fullName>Hainantoxin-II-27</fullName>
        <shortName>HNTX-II-27</shortName>
    </alternativeName>
</protein>
<sequence>MKVTLIAILTCAAVLVLHTTAAEELEAESQLMEVGMPDTELAAVDEERLFECSVSCEIEKEGNKDCKKKKCKGGWKCKSNICVKV</sequence>
<accession>D2Y2K2</accession>
<organism>
    <name type="scientific">Cyriopagopus hainanus</name>
    <name type="common">Chinese bird spider</name>
    <name type="synonym">Haplopelma hainanum</name>
    <dbReference type="NCBI Taxonomy" id="209901"/>
    <lineage>
        <taxon>Eukaryota</taxon>
        <taxon>Metazoa</taxon>
        <taxon>Ecdysozoa</taxon>
        <taxon>Arthropoda</taxon>
        <taxon>Chelicerata</taxon>
        <taxon>Arachnida</taxon>
        <taxon>Araneae</taxon>
        <taxon>Mygalomorphae</taxon>
        <taxon>Theraphosidae</taxon>
        <taxon>Haplopelma</taxon>
    </lineage>
</organism>
<keyword id="KW-1015">Disulfide bond</keyword>
<keyword id="KW-0528">Neurotoxin</keyword>
<keyword id="KW-0629">Postsynaptic neurotoxin</keyword>
<keyword id="KW-0964">Secreted</keyword>
<keyword id="KW-0732">Signal</keyword>
<keyword id="KW-0800">Toxin</keyword>
<comment type="function">
    <text evidence="1">Postsynaptic neurotoxin.</text>
</comment>
<comment type="subcellular location">
    <subcellularLocation>
        <location evidence="1">Secreted</location>
    </subcellularLocation>
</comment>
<comment type="tissue specificity">
    <text>Expressed by the venom gland.</text>
</comment>
<comment type="similarity">
    <text evidence="3">Belongs to the neurotoxin 12 (Hwtx-2) family. 02 (Hwtx-2) subfamily.</text>
</comment>
<evidence type="ECO:0000250" key="1"/>
<evidence type="ECO:0000255" key="2"/>
<evidence type="ECO:0000305" key="3"/>
<reference key="1">
    <citation type="journal article" date="2010" name="J. Proteome Res.">
        <title>Molecular diversification of peptide toxins from the tarantula Haplopelma hainanum (Ornithoctonus hainana) venom based on transcriptomic, peptidomic, and genomic analyses.</title>
        <authorList>
            <person name="Tang X."/>
            <person name="Zhang Y."/>
            <person name="Hu W."/>
            <person name="Xu D."/>
            <person name="Tao H."/>
            <person name="Yang X."/>
            <person name="Li Y."/>
            <person name="Jiang L."/>
            <person name="Liang S."/>
        </authorList>
    </citation>
    <scope>NUCLEOTIDE SEQUENCE [LARGE SCALE GENOMIC DNA]</scope>
    <source>
        <tissue>Venom gland</tissue>
    </source>
</reference>